<feature type="chain" id="PRO_0000075163" description="Alanine--tRNA ligase">
    <location>
        <begin position="1"/>
        <end position="888"/>
    </location>
</feature>
<feature type="binding site" evidence="1">
    <location>
        <position position="571"/>
    </location>
    <ligand>
        <name>Zn(2+)</name>
        <dbReference type="ChEBI" id="CHEBI:29105"/>
    </ligand>
</feature>
<feature type="binding site" evidence="1">
    <location>
        <position position="575"/>
    </location>
    <ligand>
        <name>Zn(2+)</name>
        <dbReference type="ChEBI" id="CHEBI:29105"/>
    </ligand>
</feature>
<feature type="binding site" evidence="1">
    <location>
        <position position="674"/>
    </location>
    <ligand>
        <name>Zn(2+)</name>
        <dbReference type="ChEBI" id="CHEBI:29105"/>
    </ligand>
</feature>
<feature type="binding site" evidence="1">
    <location>
        <position position="678"/>
    </location>
    <ligand>
        <name>Zn(2+)</name>
        <dbReference type="ChEBI" id="CHEBI:29105"/>
    </ligand>
</feature>
<proteinExistence type="inferred from homology"/>
<dbReference type="EC" id="6.1.1.7" evidence="1"/>
<dbReference type="EMBL" id="AP006618">
    <property type="protein sequence ID" value="BAD58492.1"/>
    <property type="molecule type" value="Genomic_DNA"/>
</dbReference>
<dbReference type="RefSeq" id="WP_011210177.1">
    <property type="nucleotide sequence ID" value="NC_006361.1"/>
</dbReference>
<dbReference type="SMR" id="Q5YTJ9"/>
<dbReference type="STRING" id="247156.NFA_36440"/>
<dbReference type="GeneID" id="61134339"/>
<dbReference type="KEGG" id="nfa:NFA_36440"/>
<dbReference type="eggNOG" id="COG0013">
    <property type="taxonomic scope" value="Bacteria"/>
</dbReference>
<dbReference type="HOGENOM" id="CLU_004485_1_1_11"/>
<dbReference type="OrthoDB" id="9803884at2"/>
<dbReference type="Proteomes" id="UP000006820">
    <property type="component" value="Chromosome"/>
</dbReference>
<dbReference type="GO" id="GO:0005829">
    <property type="term" value="C:cytosol"/>
    <property type="evidence" value="ECO:0007669"/>
    <property type="project" value="TreeGrafter"/>
</dbReference>
<dbReference type="GO" id="GO:0004813">
    <property type="term" value="F:alanine-tRNA ligase activity"/>
    <property type="evidence" value="ECO:0007669"/>
    <property type="project" value="UniProtKB-UniRule"/>
</dbReference>
<dbReference type="GO" id="GO:0002161">
    <property type="term" value="F:aminoacyl-tRNA deacylase activity"/>
    <property type="evidence" value="ECO:0007669"/>
    <property type="project" value="TreeGrafter"/>
</dbReference>
<dbReference type="GO" id="GO:0005524">
    <property type="term" value="F:ATP binding"/>
    <property type="evidence" value="ECO:0007669"/>
    <property type="project" value="UniProtKB-UniRule"/>
</dbReference>
<dbReference type="GO" id="GO:0000049">
    <property type="term" value="F:tRNA binding"/>
    <property type="evidence" value="ECO:0007669"/>
    <property type="project" value="UniProtKB-KW"/>
</dbReference>
<dbReference type="GO" id="GO:0008270">
    <property type="term" value="F:zinc ion binding"/>
    <property type="evidence" value="ECO:0007669"/>
    <property type="project" value="UniProtKB-UniRule"/>
</dbReference>
<dbReference type="GO" id="GO:0006419">
    <property type="term" value="P:alanyl-tRNA aminoacylation"/>
    <property type="evidence" value="ECO:0007669"/>
    <property type="project" value="UniProtKB-UniRule"/>
</dbReference>
<dbReference type="CDD" id="cd00673">
    <property type="entry name" value="AlaRS_core"/>
    <property type="match status" value="1"/>
</dbReference>
<dbReference type="FunFam" id="2.40.30.130:FF:000001">
    <property type="entry name" value="Alanine--tRNA ligase"/>
    <property type="match status" value="1"/>
</dbReference>
<dbReference type="FunFam" id="3.10.310.40:FF:000001">
    <property type="entry name" value="Alanine--tRNA ligase"/>
    <property type="match status" value="1"/>
</dbReference>
<dbReference type="FunFam" id="3.30.54.20:FF:000001">
    <property type="entry name" value="Alanine--tRNA ligase"/>
    <property type="match status" value="1"/>
</dbReference>
<dbReference type="FunFam" id="3.30.930.10:FF:000004">
    <property type="entry name" value="Alanine--tRNA ligase"/>
    <property type="match status" value="1"/>
</dbReference>
<dbReference type="FunFam" id="3.30.980.10:FF:000004">
    <property type="entry name" value="Alanine--tRNA ligase, cytoplasmic"/>
    <property type="match status" value="1"/>
</dbReference>
<dbReference type="Gene3D" id="2.40.30.130">
    <property type="match status" value="1"/>
</dbReference>
<dbReference type="Gene3D" id="3.10.310.40">
    <property type="match status" value="1"/>
</dbReference>
<dbReference type="Gene3D" id="3.30.54.20">
    <property type="match status" value="1"/>
</dbReference>
<dbReference type="Gene3D" id="6.10.250.550">
    <property type="match status" value="1"/>
</dbReference>
<dbReference type="Gene3D" id="3.30.930.10">
    <property type="entry name" value="Bira Bifunctional Protein, Domain 2"/>
    <property type="match status" value="1"/>
</dbReference>
<dbReference type="Gene3D" id="3.30.980.10">
    <property type="entry name" value="Threonyl-trna Synthetase, Chain A, domain 2"/>
    <property type="match status" value="1"/>
</dbReference>
<dbReference type="HAMAP" id="MF_00036_B">
    <property type="entry name" value="Ala_tRNA_synth_B"/>
    <property type="match status" value="1"/>
</dbReference>
<dbReference type="InterPro" id="IPR045864">
    <property type="entry name" value="aa-tRNA-synth_II/BPL/LPL"/>
</dbReference>
<dbReference type="InterPro" id="IPR002318">
    <property type="entry name" value="Ala-tRNA-lgiase_IIc"/>
</dbReference>
<dbReference type="InterPro" id="IPR018162">
    <property type="entry name" value="Ala-tRNA-ligase_IIc_anticod-bd"/>
</dbReference>
<dbReference type="InterPro" id="IPR018165">
    <property type="entry name" value="Ala-tRNA-synth_IIc_core"/>
</dbReference>
<dbReference type="InterPro" id="IPR018164">
    <property type="entry name" value="Ala-tRNA-synth_IIc_N"/>
</dbReference>
<dbReference type="InterPro" id="IPR050058">
    <property type="entry name" value="Ala-tRNA_ligase"/>
</dbReference>
<dbReference type="InterPro" id="IPR023033">
    <property type="entry name" value="Ala_tRNA_ligase_euk/bac"/>
</dbReference>
<dbReference type="InterPro" id="IPR003156">
    <property type="entry name" value="DHHA1_dom"/>
</dbReference>
<dbReference type="InterPro" id="IPR018163">
    <property type="entry name" value="Thr/Ala-tRNA-synth_IIc_edit"/>
</dbReference>
<dbReference type="InterPro" id="IPR009000">
    <property type="entry name" value="Transl_B-barrel_sf"/>
</dbReference>
<dbReference type="InterPro" id="IPR012947">
    <property type="entry name" value="tRNA_SAD"/>
</dbReference>
<dbReference type="NCBIfam" id="TIGR00344">
    <property type="entry name" value="alaS"/>
    <property type="match status" value="1"/>
</dbReference>
<dbReference type="PANTHER" id="PTHR11777:SF9">
    <property type="entry name" value="ALANINE--TRNA LIGASE, CYTOPLASMIC"/>
    <property type="match status" value="1"/>
</dbReference>
<dbReference type="PANTHER" id="PTHR11777">
    <property type="entry name" value="ALANYL-TRNA SYNTHETASE"/>
    <property type="match status" value="1"/>
</dbReference>
<dbReference type="Pfam" id="PF02272">
    <property type="entry name" value="DHHA1"/>
    <property type="match status" value="1"/>
</dbReference>
<dbReference type="Pfam" id="PF01411">
    <property type="entry name" value="tRNA-synt_2c"/>
    <property type="match status" value="1"/>
</dbReference>
<dbReference type="Pfam" id="PF07973">
    <property type="entry name" value="tRNA_SAD"/>
    <property type="match status" value="1"/>
</dbReference>
<dbReference type="PRINTS" id="PR00980">
    <property type="entry name" value="TRNASYNTHALA"/>
</dbReference>
<dbReference type="SMART" id="SM00863">
    <property type="entry name" value="tRNA_SAD"/>
    <property type="match status" value="1"/>
</dbReference>
<dbReference type="SUPFAM" id="SSF55681">
    <property type="entry name" value="Class II aaRS and biotin synthetases"/>
    <property type="match status" value="1"/>
</dbReference>
<dbReference type="SUPFAM" id="SSF101353">
    <property type="entry name" value="Putative anticodon-binding domain of alanyl-tRNA synthetase (AlaRS)"/>
    <property type="match status" value="1"/>
</dbReference>
<dbReference type="SUPFAM" id="SSF55186">
    <property type="entry name" value="ThrRS/AlaRS common domain"/>
    <property type="match status" value="1"/>
</dbReference>
<dbReference type="SUPFAM" id="SSF50447">
    <property type="entry name" value="Translation proteins"/>
    <property type="match status" value="1"/>
</dbReference>
<dbReference type="PROSITE" id="PS50860">
    <property type="entry name" value="AA_TRNA_LIGASE_II_ALA"/>
    <property type="match status" value="1"/>
</dbReference>
<sequence>MQTHEIRRRFLDHFVRAGHTEVPSASLILADPNLLFVNAGMVQFKPYFLGQEAPPYPRATSVQKCVRTGDIEEVGVTTRHNTFFQMAGNFSFGDYFKEGAITLAWELISKPQSEGGFGFDPERIWVTAYQDDPEAAEIWHRMAGIPKERIQFRDGKDNYWDMGVPGPGGPCSEIYFDRGPAYGKDGGPVADEDRYLEIWNLVFMQDVRGELSPKQGHPPIGSLPKKNIDTGMGIERVAMLLQGVDNVYETDLLRPIIGKAEELTGRRYGAEHASDVRFRVIADHARTAAMLISDGVNPGNDGRGYVLRRLLRRIVRSARLLGAEKPVMAEFMQVVSDLMSPSYPELATDFDRIRTVAVGEETAFLKTLTTGSTLFDNTAAAVKAKGGTKIAGADAFTLHDTYGFPIDLTLEMAAEAGLSVDEEGFRSLMAEQRRRAKEDAAARKHAHADLSIYKELVDRGATEFTGFDELTSEAHVLALIADGVRVPTATQGQDVEVILDRSPLYAESGGQIADRGSITASGLKLRVNDVQKIAKKLWVHKTTVEQGQITEGDVVLAQADPAWRRGATQGHSGTHMVHAALRQVLGPNAVQAGSLNKPGYLRFDFNWQGQLSEQQKADIEAVSNDAVGADFPVNTFVTDLPKAKQMGALALFGENYGDEVRVVEIGGPFSMELCGGTHVQHSSQIGPITLLGESSVGSGVRRVEAFVGLDSYKYLAKERALLAGVASSLKVPSEEVPARVEQLVERLKVAEKELERTKIAAVLSSAGKFVEEAERVGRVLLVAAAAPEGVAAGDLRTLATDIRGRFGSEPAVVVLLGNADGKVPFVVAVNKSAQEIGVKAGELVGSFGPSIAGRGGGKPEMAQGAGSDPSGIPAGLAAVRARVAEIAG</sequence>
<reference key="1">
    <citation type="journal article" date="2004" name="Proc. Natl. Acad. Sci. U.S.A.">
        <title>The complete genomic sequence of Nocardia farcinica IFM 10152.</title>
        <authorList>
            <person name="Ishikawa J."/>
            <person name="Yamashita A."/>
            <person name="Mikami Y."/>
            <person name="Hoshino Y."/>
            <person name="Kurita H."/>
            <person name="Hotta K."/>
            <person name="Shiba T."/>
            <person name="Hattori M."/>
        </authorList>
    </citation>
    <scope>NUCLEOTIDE SEQUENCE [LARGE SCALE GENOMIC DNA]</scope>
    <source>
        <strain>IFM 10152</strain>
    </source>
</reference>
<gene>
    <name evidence="1" type="primary">alaS</name>
    <name type="ordered locus">NFA_36440</name>
</gene>
<keyword id="KW-0030">Aminoacyl-tRNA synthetase</keyword>
<keyword id="KW-0067">ATP-binding</keyword>
<keyword id="KW-0963">Cytoplasm</keyword>
<keyword id="KW-0436">Ligase</keyword>
<keyword id="KW-0479">Metal-binding</keyword>
<keyword id="KW-0547">Nucleotide-binding</keyword>
<keyword id="KW-0648">Protein biosynthesis</keyword>
<keyword id="KW-1185">Reference proteome</keyword>
<keyword id="KW-0694">RNA-binding</keyword>
<keyword id="KW-0820">tRNA-binding</keyword>
<keyword id="KW-0862">Zinc</keyword>
<protein>
    <recommendedName>
        <fullName evidence="1">Alanine--tRNA ligase</fullName>
        <ecNumber evidence="1">6.1.1.7</ecNumber>
    </recommendedName>
    <alternativeName>
        <fullName evidence="1">Alanyl-tRNA synthetase</fullName>
        <shortName evidence="1">AlaRS</shortName>
    </alternativeName>
</protein>
<accession>Q5YTJ9</accession>
<comment type="function">
    <text evidence="1">Catalyzes the attachment of alanine to tRNA(Ala) in a two-step reaction: alanine is first activated by ATP to form Ala-AMP and then transferred to the acceptor end of tRNA(Ala). Also edits incorrectly charged Ser-tRNA(Ala) and Gly-tRNA(Ala) via its editing domain.</text>
</comment>
<comment type="catalytic activity">
    <reaction evidence="1">
        <text>tRNA(Ala) + L-alanine + ATP = L-alanyl-tRNA(Ala) + AMP + diphosphate</text>
        <dbReference type="Rhea" id="RHEA:12540"/>
        <dbReference type="Rhea" id="RHEA-COMP:9657"/>
        <dbReference type="Rhea" id="RHEA-COMP:9923"/>
        <dbReference type="ChEBI" id="CHEBI:30616"/>
        <dbReference type="ChEBI" id="CHEBI:33019"/>
        <dbReference type="ChEBI" id="CHEBI:57972"/>
        <dbReference type="ChEBI" id="CHEBI:78442"/>
        <dbReference type="ChEBI" id="CHEBI:78497"/>
        <dbReference type="ChEBI" id="CHEBI:456215"/>
        <dbReference type="EC" id="6.1.1.7"/>
    </reaction>
</comment>
<comment type="cofactor">
    <cofactor evidence="1">
        <name>Zn(2+)</name>
        <dbReference type="ChEBI" id="CHEBI:29105"/>
    </cofactor>
    <text evidence="1">Binds 1 zinc ion per subunit.</text>
</comment>
<comment type="subcellular location">
    <subcellularLocation>
        <location evidence="1">Cytoplasm</location>
    </subcellularLocation>
</comment>
<comment type="domain">
    <text evidence="1">Consists of three domains; the N-terminal catalytic domain, the editing domain and the C-terminal C-Ala domain. The editing domain removes incorrectly charged amino acids, while the C-Ala domain, along with tRNA(Ala), serves as a bridge to cooperatively bring together the editing and aminoacylation centers thus stimulating deacylation of misacylated tRNAs.</text>
</comment>
<comment type="similarity">
    <text evidence="1">Belongs to the class-II aminoacyl-tRNA synthetase family.</text>
</comment>
<organism>
    <name type="scientific">Nocardia farcinica (strain IFM 10152)</name>
    <dbReference type="NCBI Taxonomy" id="247156"/>
    <lineage>
        <taxon>Bacteria</taxon>
        <taxon>Bacillati</taxon>
        <taxon>Actinomycetota</taxon>
        <taxon>Actinomycetes</taxon>
        <taxon>Mycobacteriales</taxon>
        <taxon>Nocardiaceae</taxon>
        <taxon>Nocardia</taxon>
    </lineage>
</organism>
<name>SYA_NOCFA</name>
<evidence type="ECO:0000255" key="1">
    <source>
        <dbReference type="HAMAP-Rule" id="MF_00036"/>
    </source>
</evidence>